<dbReference type="EC" id="2.1.2.10" evidence="1"/>
<dbReference type="EMBL" id="CP000607">
    <property type="protein sequence ID" value="ABP36473.1"/>
    <property type="molecule type" value="Genomic_DNA"/>
</dbReference>
<dbReference type="SMR" id="A4SDB4"/>
<dbReference type="STRING" id="290318.Cvib_0451"/>
<dbReference type="KEGG" id="pvi:Cvib_0451"/>
<dbReference type="eggNOG" id="COG0404">
    <property type="taxonomic scope" value="Bacteria"/>
</dbReference>
<dbReference type="HOGENOM" id="CLU_007884_10_2_10"/>
<dbReference type="OrthoDB" id="9774591at2"/>
<dbReference type="GO" id="GO:0005829">
    <property type="term" value="C:cytosol"/>
    <property type="evidence" value="ECO:0007669"/>
    <property type="project" value="TreeGrafter"/>
</dbReference>
<dbReference type="GO" id="GO:0005960">
    <property type="term" value="C:glycine cleavage complex"/>
    <property type="evidence" value="ECO:0007669"/>
    <property type="project" value="InterPro"/>
</dbReference>
<dbReference type="GO" id="GO:0004047">
    <property type="term" value="F:aminomethyltransferase activity"/>
    <property type="evidence" value="ECO:0007669"/>
    <property type="project" value="UniProtKB-UniRule"/>
</dbReference>
<dbReference type="GO" id="GO:0008483">
    <property type="term" value="F:transaminase activity"/>
    <property type="evidence" value="ECO:0007669"/>
    <property type="project" value="UniProtKB-KW"/>
</dbReference>
<dbReference type="GO" id="GO:0019464">
    <property type="term" value="P:glycine decarboxylation via glycine cleavage system"/>
    <property type="evidence" value="ECO:0007669"/>
    <property type="project" value="UniProtKB-UniRule"/>
</dbReference>
<dbReference type="FunFam" id="3.30.70.1400:FF:000001">
    <property type="entry name" value="Aminomethyltransferase"/>
    <property type="match status" value="1"/>
</dbReference>
<dbReference type="Gene3D" id="2.40.30.110">
    <property type="entry name" value="Aminomethyltransferase beta-barrel domains"/>
    <property type="match status" value="1"/>
</dbReference>
<dbReference type="Gene3D" id="3.30.70.1400">
    <property type="entry name" value="Aminomethyltransferase beta-barrel domains"/>
    <property type="match status" value="1"/>
</dbReference>
<dbReference type="Gene3D" id="4.10.1250.10">
    <property type="entry name" value="Aminomethyltransferase fragment"/>
    <property type="match status" value="1"/>
</dbReference>
<dbReference type="Gene3D" id="3.30.1360.120">
    <property type="entry name" value="Probable tRNA modification gtpase trme, domain 1"/>
    <property type="match status" value="1"/>
</dbReference>
<dbReference type="HAMAP" id="MF_00259">
    <property type="entry name" value="GcvT"/>
    <property type="match status" value="1"/>
</dbReference>
<dbReference type="InterPro" id="IPR006223">
    <property type="entry name" value="GCS_T"/>
</dbReference>
<dbReference type="InterPro" id="IPR022903">
    <property type="entry name" value="GCS_T_bac"/>
</dbReference>
<dbReference type="InterPro" id="IPR013977">
    <property type="entry name" value="GCST_C"/>
</dbReference>
<dbReference type="InterPro" id="IPR006222">
    <property type="entry name" value="GCV_T_N"/>
</dbReference>
<dbReference type="InterPro" id="IPR028896">
    <property type="entry name" value="GcvT/YgfZ/DmdA"/>
</dbReference>
<dbReference type="InterPro" id="IPR029043">
    <property type="entry name" value="GcvT/YgfZ_C"/>
</dbReference>
<dbReference type="InterPro" id="IPR027266">
    <property type="entry name" value="TrmE/GcvT_dom1"/>
</dbReference>
<dbReference type="NCBIfam" id="TIGR00528">
    <property type="entry name" value="gcvT"/>
    <property type="match status" value="1"/>
</dbReference>
<dbReference type="NCBIfam" id="NF001567">
    <property type="entry name" value="PRK00389.1"/>
    <property type="match status" value="1"/>
</dbReference>
<dbReference type="PANTHER" id="PTHR43757">
    <property type="entry name" value="AMINOMETHYLTRANSFERASE"/>
    <property type="match status" value="1"/>
</dbReference>
<dbReference type="PANTHER" id="PTHR43757:SF2">
    <property type="entry name" value="AMINOMETHYLTRANSFERASE, MITOCHONDRIAL"/>
    <property type="match status" value="1"/>
</dbReference>
<dbReference type="Pfam" id="PF01571">
    <property type="entry name" value="GCV_T"/>
    <property type="match status" value="1"/>
</dbReference>
<dbReference type="Pfam" id="PF08669">
    <property type="entry name" value="GCV_T_C"/>
    <property type="match status" value="1"/>
</dbReference>
<dbReference type="PIRSF" id="PIRSF006487">
    <property type="entry name" value="GcvT"/>
    <property type="match status" value="1"/>
</dbReference>
<dbReference type="SUPFAM" id="SSF101790">
    <property type="entry name" value="Aminomethyltransferase beta-barrel domain"/>
    <property type="match status" value="1"/>
</dbReference>
<dbReference type="SUPFAM" id="SSF103025">
    <property type="entry name" value="Folate-binding domain"/>
    <property type="match status" value="1"/>
</dbReference>
<reference key="1">
    <citation type="submission" date="2007-03" db="EMBL/GenBank/DDBJ databases">
        <title>Complete sequence of Prosthecochloris vibrioformis DSM 265.</title>
        <authorList>
            <consortium name="US DOE Joint Genome Institute"/>
            <person name="Copeland A."/>
            <person name="Lucas S."/>
            <person name="Lapidus A."/>
            <person name="Barry K."/>
            <person name="Detter J.C."/>
            <person name="Glavina del Rio T."/>
            <person name="Hammon N."/>
            <person name="Israni S."/>
            <person name="Pitluck S."/>
            <person name="Schmutz J."/>
            <person name="Larimer F."/>
            <person name="Land M."/>
            <person name="Hauser L."/>
            <person name="Mikhailova N."/>
            <person name="Li T."/>
            <person name="Overmann J."/>
            <person name="Schuster S.C."/>
            <person name="Bryant D.A."/>
            <person name="Richardson P."/>
        </authorList>
    </citation>
    <scope>NUCLEOTIDE SEQUENCE [LARGE SCALE GENOMIC DNA]</scope>
    <source>
        <strain>DSM 265 / 1930</strain>
    </source>
</reference>
<organism>
    <name type="scientific">Chlorobium phaeovibrioides (strain DSM 265 / 1930)</name>
    <name type="common">Prosthecochloris vibrioformis (strain DSM 265)</name>
    <dbReference type="NCBI Taxonomy" id="290318"/>
    <lineage>
        <taxon>Bacteria</taxon>
        <taxon>Pseudomonadati</taxon>
        <taxon>Chlorobiota</taxon>
        <taxon>Chlorobiia</taxon>
        <taxon>Chlorobiales</taxon>
        <taxon>Chlorobiaceae</taxon>
        <taxon>Chlorobium/Pelodictyon group</taxon>
        <taxon>Chlorobium</taxon>
    </lineage>
</organism>
<protein>
    <recommendedName>
        <fullName evidence="1">Aminomethyltransferase</fullName>
        <ecNumber evidence="1">2.1.2.10</ecNumber>
    </recommendedName>
    <alternativeName>
        <fullName evidence="1">Glycine cleavage system T protein</fullName>
    </alternativeName>
</protein>
<gene>
    <name evidence="1" type="primary">gcvT</name>
    <name type="ordered locus">Cvib_0451</name>
</gene>
<keyword id="KW-0032">Aminotransferase</keyword>
<keyword id="KW-0808">Transferase</keyword>
<name>GCST_CHLPM</name>
<comment type="function">
    <text evidence="1">The glycine cleavage system catalyzes the degradation of glycine.</text>
</comment>
<comment type="catalytic activity">
    <reaction evidence="1">
        <text>N(6)-[(R)-S(8)-aminomethyldihydrolipoyl]-L-lysyl-[protein] + (6S)-5,6,7,8-tetrahydrofolate = N(6)-[(R)-dihydrolipoyl]-L-lysyl-[protein] + (6R)-5,10-methylene-5,6,7,8-tetrahydrofolate + NH4(+)</text>
        <dbReference type="Rhea" id="RHEA:16945"/>
        <dbReference type="Rhea" id="RHEA-COMP:10475"/>
        <dbReference type="Rhea" id="RHEA-COMP:10492"/>
        <dbReference type="ChEBI" id="CHEBI:15636"/>
        <dbReference type="ChEBI" id="CHEBI:28938"/>
        <dbReference type="ChEBI" id="CHEBI:57453"/>
        <dbReference type="ChEBI" id="CHEBI:83100"/>
        <dbReference type="ChEBI" id="CHEBI:83143"/>
        <dbReference type="EC" id="2.1.2.10"/>
    </reaction>
</comment>
<comment type="subunit">
    <text evidence="1">The glycine cleavage system is composed of four proteins: P, T, L and H.</text>
</comment>
<comment type="similarity">
    <text evidence="1">Belongs to the GcvT family.</text>
</comment>
<feature type="chain" id="PRO_1000078588" description="Aminomethyltransferase">
    <location>
        <begin position="1"/>
        <end position="365"/>
    </location>
</feature>
<sequence>MKKTSLSSWHEKAGAKIIDFGGWLMPVQYSGIMAEHKAVRSAAGLFDVSHMGNFYVKGRRALEFLQSVTTNDLSRTVDGQAQYTIMLYENGGIVDDLIIYRIDSVTFFLIVNAGNCDKDFAWLEEHAGAFEGVQLSNHSDQLSLIALQGPKAFSILSRVIPEIDADRLPSFHFRQLPFMGAELMVARTGYTGEAGVEICLPNALAQPLWEALLDAGREDGLVPVGLGARDTLRLEMGYSLYGHEIDQDTNPLEARLKWVVSMEKGPFIGREACRQVELDPRFGVAGFSLEGRALARQGCRVFNADRQEIGKVCSGTISPTLQEPIGTASLVREYLKPGTPVFVEIRGSLQPGQIRRLPFVKPALL</sequence>
<proteinExistence type="inferred from homology"/>
<evidence type="ECO:0000255" key="1">
    <source>
        <dbReference type="HAMAP-Rule" id="MF_00259"/>
    </source>
</evidence>
<accession>A4SDB4</accession>